<feature type="chain" id="PRO_0000118692" description="NADH-quinone oxidoreductase subunit E">
    <location>
        <begin position="1"/>
        <end position="166"/>
    </location>
</feature>
<feature type="binding site" evidence="2">
    <location>
        <position position="92"/>
    </location>
    <ligand>
        <name>[2Fe-2S] cluster</name>
        <dbReference type="ChEBI" id="CHEBI:190135"/>
    </ligand>
</feature>
<feature type="binding site" evidence="2">
    <location>
        <position position="97"/>
    </location>
    <ligand>
        <name>[2Fe-2S] cluster</name>
        <dbReference type="ChEBI" id="CHEBI:190135"/>
    </ligand>
</feature>
<feature type="binding site" evidence="2">
    <location>
        <position position="133"/>
    </location>
    <ligand>
        <name>[2Fe-2S] cluster</name>
        <dbReference type="ChEBI" id="CHEBI:190135"/>
    </ligand>
</feature>
<feature type="binding site" evidence="2">
    <location>
        <position position="137"/>
    </location>
    <ligand>
        <name>[2Fe-2S] cluster</name>
        <dbReference type="ChEBI" id="CHEBI:190135"/>
    </ligand>
</feature>
<sequence length="166" mass="18590">MHENQQPQTEAFELSAAEREAIEHEMHHYEDPRAASIEALKIVQKQRGWVPDGAIHAIADVLGIPASDVEGVATFYSQIFRQPVGRHVIRYCDSVVCHINGYQGIQAALEKKLNIKPGQTTFDGRFTLLPTCCLGNCDKGPNMMIDEDTHAHLTPEAIPELLERYK</sequence>
<protein>
    <recommendedName>
        <fullName>NADH-quinone oxidoreductase subunit E</fullName>
        <ecNumber>7.1.1.-</ecNumber>
    </recommendedName>
    <alternativeName>
        <fullName>NADH dehydrogenase I subunit E</fullName>
    </alternativeName>
    <alternativeName>
        <fullName>NDH-1 subunit E</fullName>
    </alternativeName>
    <alternativeName>
        <fullName>NUO5</fullName>
    </alternativeName>
</protein>
<organism>
    <name type="scientific">Escherichia coli O6:H1 (strain CFT073 / ATCC 700928 / UPEC)</name>
    <dbReference type="NCBI Taxonomy" id="199310"/>
    <lineage>
        <taxon>Bacteria</taxon>
        <taxon>Pseudomonadati</taxon>
        <taxon>Pseudomonadota</taxon>
        <taxon>Gammaproteobacteria</taxon>
        <taxon>Enterobacterales</taxon>
        <taxon>Enterobacteriaceae</taxon>
        <taxon>Escherichia</taxon>
    </lineage>
</organism>
<comment type="function">
    <text evidence="1">NDH-1 shuttles electrons from NADH, via FMN and iron-sulfur (Fe-S) centers, to quinones in the respiratory chain. The immediate electron acceptor for the enzyme in this species is believed to be ubiquinone. Couples the redox reaction to proton translocation (for every two electrons transferred, four hydrogen ions are translocated across the cytoplasmic membrane), and thus conserves the redox energy in a proton gradient (By similarity).</text>
</comment>
<comment type="catalytic activity">
    <reaction>
        <text>a quinone + NADH + 5 H(+)(in) = a quinol + NAD(+) + 4 H(+)(out)</text>
        <dbReference type="Rhea" id="RHEA:57888"/>
        <dbReference type="ChEBI" id="CHEBI:15378"/>
        <dbReference type="ChEBI" id="CHEBI:24646"/>
        <dbReference type="ChEBI" id="CHEBI:57540"/>
        <dbReference type="ChEBI" id="CHEBI:57945"/>
        <dbReference type="ChEBI" id="CHEBI:132124"/>
    </reaction>
</comment>
<comment type="cofactor">
    <cofactor evidence="3">
        <name>[2Fe-2S] cluster</name>
        <dbReference type="ChEBI" id="CHEBI:190135"/>
    </cofactor>
    <text evidence="3">Binds 1 [2Fe-2S] cluster.</text>
</comment>
<comment type="subunit">
    <text evidence="1">Composed of 13 different subunits. Subunits NuoCD, E, F, and G constitute the peripheral sector of the complex (By similarity).</text>
</comment>
<comment type="similarity">
    <text evidence="3">Belongs to the complex I 24 kDa subunit family.</text>
</comment>
<gene>
    <name type="primary">nuoE</name>
    <name type="ordered locus">c2826</name>
</gene>
<name>NUOE_ECOL6</name>
<evidence type="ECO:0000250" key="1"/>
<evidence type="ECO:0000255" key="2"/>
<evidence type="ECO:0000305" key="3"/>
<accession>P0AFD2</accession>
<accession>P33601</accession>
<proteinExistence type="inferred from homology"/>
<keyword id="KW-0001">2Fe-2S</keyword>
<keyword id="KW-0408">Iron</keyword>
<keyword id="KW-0411">Iron-sulfur</keyword>
<keyword id="KW-0479">Metal-binding</keyword>
<keyword id="KW-0520">NAD</keyword>
<keyword id="KW-0874">Quinone</keyword>
<keyword id="KW-1185">Reference proteome</keyword>
<keyword id="KW-1278">Translocase</keyword>
<keyword id="KW-0830">Ubiquinone</keyword>
<reference key="1">
    <citation type="journal article" date="2002" name="Proc. Natl. Acad. Sci. U.S.A.">
        <title>Extensive mosaic structure revealed by the complete genome sequence of uropathogenic Escherichia coli.</title>
        <authorList>
            <person name="Welch R.A."/>
            <person name="Burland V."/>
            <person name="Plunkett G. III"/>
            <person name="Redford P."/>
            <person name="Roesch P."/>
            <person name="Rasko D."/>
            <person name="Buckles E.L."/>
            <person name="Liou S.-R."/>
            <person name="Boutin A."/>
            <person name="Hackett J."/>
            <person name="Stroud D."/>
            <person name="Mayhew G.F."/>
            <person name="Rose D.J."/>
            <person name="Zhou S."/>
            <person name="Schwartz D.C."/>
            <person name="Perna N.T."/>
            <person name="Mobley H.L.T."/>
            <person name="Donnenberg M.S."/>
            <person name="Blattner F.R."/>
        </authorList>
    </citation>
    <scope>NUCLEOTIDE SEQUENCE [LARGE SCALE GENOMIC DNA]</scope>
    <source>
        <strain>CFT073 / ATCC 700928 / UPEC</strain>
    </source>
</reference>
<dbReference type="EC" id="7.1.1.-"/>
<dbReference type="EMBL" id="AE014075">
    <property type="protein sequence ID" value="AAN81280.1"/>
    <property type="molecule type" value="Genomic_DNA"/>
</dbReference>
<dbReference type="RefSeq" id="WP_000545042.1">
    <property type="nucleotide sequence ID" value="NZ_CP051263.1"/>
</dbReference>
<dbReference type="SMR" id="P0AFD2"/>
<dbReference type="STRING" id="199310.c2826"/>
<dbReference type="GeneID" id="93774889"/>
<dbReference type="KEGG" id="ecc:c2826"/>
<dbReference type="eggNOG" id="COG1905">
    <property type="taxonomic scope" value="Bacteria"/>
</dbReference>
<dbReference type="HOGENOM" id="CLU_054362_2_0_6"/>
<dbReference type="BioCyc" id="ECOL199310:C2826-MONOMER"/>
<dbReference type="Proteomes" id="UP000001410">
    <property type="component" value="Chromosome"/>
</dbReference>
<dbReference type="GO" id="GO:0051537">
    <property type="term" value="F:2 iron, 2 sulfur cluster binding"/>
    <property type="evidence" value="ECO:0007669"/>
    <property type="project" value="UniProtKB-KW"/>
</dbReference>
<dbReference type="GO" id="GO:0046872">
    <property type="term" value="F:metal ion binding"/>
    <property type="evidence" value="ECO:0007669"/>
    <property type="project" value="UniProtKB-KW"/>
</dbReference>
<dbReference type="GO" id="GO:0003954">
    <property type="term" value="F:NADH dehydrogenase activity"/>
    <property type="evidence" value="ECO:0007669"/>
    <property type="project" value="TreeGrafter"/>
</dbReference>
<dbReference type="GO" id="GO:0048038">
    <property type="term" value="F:quinone binding"/>
    <property type="evidence" value="ECO:0007669"/>
    <property type="project" value="UniProtKB-KW"/>
</dbReference>
<dbReference type="CDD" id="cd03064">
    <property type="entry name" value="TRX_Fd_NuoE"/>
    <property type="match status" value="1"/>
</dbReference>
<dbReference type="FunFam" id="1.10.10.1590:FF:000001">
    <property type="entry name" value="NADH-quinone oxidoreductase subunit E"/>
    <property type="match status" value="1"/>
</dbReference>
<dbReference type="FunFam" id="3.40.30.10:FF:000015">
    <property type="entry name" value="NADH-quinone oxidoreductase subunit E"/>
    <property type="match status" value="1"/>
</dbReference>
<dbReference type="Gene3D" id="3.40.30.10">
    <property type="entry name" value="Glutaredoxin"/>
    <property type="match status" value="1"/>
</dbReference>
<dbReference type="Gene3D" id="1.10.10.1590">
    <property type="entry name" value="NADH-quinone oxidoreductase subunit E"/>
    <property type="match status" value="1"/>
</dbReference>
<dbReference type="InterPro" id="IPR002023">
    <property type="entry name" value="NuoE-like"/>
</dbReference>
<dbReference type="InterPro" id="IPR042128">
    <property type="entry name" value="NuoE_dom"/>
</dbReference>
<dbReference type="InterPro" id="IPR041921">
    <property type="entry name" value="NuoE_N"/>
</dbReference>
<dbReference type="InterPro" id="IPR036249">
    <property type="entry name" value="Thioredoxin-like_sf"/>
</dbReference>
<dbReference type="NCBIfam" id="TIGR01958">
    <property type="entry name" value="nuoE_fam"/>
    <property type="match status" value="1"/>
</dbReference>
<dbReference type="NCBIfam" id="NF005722">
    <property type="entry name" value="PRK07539.1-2"/>
    <property type="match status" value="1"/>
</dbReference>
<dbReference type="PANTHER" id="PTHR10371:SF3">
    <property type="entry name" value="NADH DEHYDROGENASE [UBIQUINONE] FLAVOPROTEIN 2, MITOCHONDRIAL"/>
    <property type="match status" value="1"/>
</dbReference>
<dbReference type="PANTHER" id="PTHR10371">
    <property type="entry name" value="NADH DEHYDROGENASE UBIQUINONE FLAVOPROTEIN 2, MITOCHONDRIAL"/>
    <property type="match status" value="1"/>
</dbReference>
<dbReference type="Pfam" id="PF01257">
    <property type="entry name" value="2Fe-2S_thioredx"/>
    <property type="match status" value="1"/>
</dbReference>
<dbReference type="PIRSF" id="PIRSF000216">
    <property type="entry name" value="NADH_DH_24kDa"/>
    <property type="match status" value="1"/>
</dbReference>
<dbReference type="SUPFAM" id="SSF52833">
    <property type="entry name" value="Thioredoxin-like"/>
    <property type="match status" value="1"/>
</dbReference>
<dbReference type="PROSITE" id="PS01099">
    <property type="entry name" value="COMPLEX1_24K"/>
    <property type="match status" value="1"/>
</dbReference>